<evidence type="ECO:0000255" key="1">
    <source>
        <dbReference type="HAMAP-Rule" id="MF_01398"/>
    </source>
</evidence>
<feature type="chain" id="PRO_0000368562" description="ATP synthase subunit b">
    <location>
        <begin position="1"/>
        <end position="173"/>
    </location>
</feature>
<feature type="transmembrane region" description="Helical" evidence="1">
    <location>
        <begin position="12"/>
        <end position="32"/>
    </location>
</feature>
<sequence length="173" mass="19042">MVLLAAKGLSLLDVNPGLVVWTLVTFLVVVLVLKKFAWDVILKALDERAETVQNDIKKASELRLEAEALLKDYEARLNSAKDEANAIVAEAKSDALKLKNKLLEETNGEVKAQKDQAVKEIELAKAKALGQLQAQIVEMTITVAAKVLEKQLKSEDYKAFIETELDKLGKLSA</sequence>
<reference key="1">
    <citation type="journal article" date="2003" name="Nature">
        <title>Unique physiological and pathogenic features of Leptospira interrogans revealed by whole-genome sequencing.</title>
        <authorList>
            <person name="Ren S.-X."/>
            <person name="Fu G."/>
            <person name="Jiang X.-G."/>
            <person name="Zeng R."/>
            <person name="Miao Y.-G."/>
            <person name="Xu H."/>
            <person name="Zhang Y.-X."/>
            <person name="Xiong H."/>
            <person name="Lu G."/>
            <person name="Lu L.-F."/>
            <person name="Jiang H.-Q."/>
            <person name="Jia J."/>
            <person name="Tu Y.-F."/>
            <person name="Jiang J.-X."/>
            <person name="Gu W.-Y."/>
            <person name="Zhang Y.-Q."/>
            <person name="Cai Z."/>
            <person name="Sheng H.-H."/>
            <person name="Yin H.-F."/>
            <person name="Zhang Y."/>
            <person name="Zhu G.-F."/>
            <person name="Wan M."/>
            <person name="Huang H.-L."/>
            <person name="Qian Z."/>
            <person name="Wang S.-Y."/>
            <person name="Ma W."/>
            <person name="Yao Z.-J."/>
            <person name="Shen Y."/>
            <person name="Qiang B.-Q."/>
            <person name="Xia Q.-C."/>
            <person name="Guo X.-K."/>
            <person name="Danchin A."/>
            <person name="Saint Girons I."/>
            <person name="Somerville R.L."/>
            <person name="Wen Y.-M."/>
            <person name="Shi M.-H."/>
            <person name="Chen Z."/>
            <person name="Xu J.-G."/>
            <person name="Zhao G.-P."/>
        </authorList>
    </citation>
    <scope>NUCLEOTIDE SEQUENCE [LARGE SCALE GENOMIC DNA]</scope>
    <source>
        <strain>56601</strain>
    </source>
</reference>
<dbReference type="EMBL" id="AE010300">
    <property type="protein sequence ID" value="AAN49980.1"/>
    <property type="molecule type" value="Genomic_DNA"/>
</dbReference>
<dbReference type="RefSeq" id="NP_712962.1">
    <property type="nucleotide sequence ID" value="NC_004342.2"/>
</dbReference>
<dbReference type="RefSeq" id="WP_000243426.1">
    <property type="nucleotide sequence ID" value="NC_004342.2"/>
</dbReference>
<dbReference type="SMR" id="Q8F2J0"/>
<dbReference type="STRING" id="189518.LA_2781"/>
<dbReference type="PaxDb" id="189518-LA_2781"/>
<dbReference type="EnsemblBacteria" id="AAN49980">
    <property type="protein sequence ID" value="AAN49980"/>
    <property type="gene ID" value="LA_2781"/>
</dbReference>
<dbReference type="KEGG" id="lil:LA_2781"/>
<dbReference type="PATRIC" id="fig|189518.3.peg.2762"/>
<dbReference type="HOGENOM" id="CLU_079215_4_1_12"/>
<dbReference type="InParanoid" id="Q8F2J0"/>
<dbReference type="OrthoDB" id="308784at2"/>
<dbReference type="Proteomes" id="UP000001408">
    <property type="component" value="Chromosome I"/>
</dbReference>
<dbReference type="GO" id="GO:0005886">
    <property type="term" value="C:plasma membrane"/>
    <property type="evidence" value="ECO:0007669"/>
    <property type="project" value="UniProtKB-SubCell"/>
</dbReference>
<dbReference type="GO" id="GO:0045259">
    <property type="term" value="C:proton-transporting ATP synthase complex"/>
    <property type="evidence" value="ECO:0007669"/>
    <property type="project" value="UniProtKB-KW"/>
</dbReference>
<dbReference type="GO" id="GO:0046933">
    <property type="term" value="F:proton-transporting ATP synthase activity, rotational mechanism"/>
    <property type="evidence" value="ECO:0007669"/>
    <property type="project" value="UniProtKB-UniRule"/>
</dbReference>
<dbReference type="CDD" id="cd06503">
    <property type="entry name" value="ATP-synt_Fo_b"/>
    <property type="match status" value="1"/>
</dbReference>
<dbReference type="HAMAP" id="MF_01398">
    <property type="entry name" value="ATP_synth_b_bprime"/>
    <property type="match status" value="1"/>
</dbReference>
<dbReference type="InterPro" id="IPR002146">
    <property type="entry name" value="ATP_synth_b/b'su_bac/chlpt"/>
</dbReference>
<dbReference type="InterPro" id="IPR005864">
    <property type="entry name" value="ATP_synth_F0_bsu_bac"/>
</dbReference>
<dbReference type="InterPro" id="IPR050059">
    <property type="entry name" value="ATP_synthase_B_chain"/>
</dbReference>
<dbReference type="NCBIfam" id="TIGR01144">
    <property type="entry name" value="ATP_synt_b"/>
    <property type="match status" value="1"/>
</dbReference>
<dbReference type="NCBIfam" id="NF009991">
    <property type="entry name" value="PRK13460.1"/>
    <property type="match status" value="1"/>
</dbReference>
<dbReference type="PANTHER" id="PTHR33445:SF1">
    <property type="entry name" value="ATP SYNTHASE SUBUNIT B"/>
    <property type="match status" value="1"/>
</dbReference>
<dbReference type="PANTHER" id="PTHR33445">
    <property type="entry name" value="ATP SYNTHASE SUBUNIT B', CHLOROPLASTIC"/>
    <property type="match status" value="1"/>
</dbReference>
<dbReference type="Pfam" id="PF00430">
    <property type="entry name" value="ATP-synt_B"/>
    <property type="match status" value="1"/>
</dbReference>
<protein>
    <recommendedName>
        <fullName evidence="1">ATP synthase subunit b</fullName>
    </recommendedName>
    <alternativeName>
        <fullName evidence="1">ATP synthase F(0) sector subunit b</fullName>
    </alternativeName>
    <alternativeName>
        <fullName evidence="1">ATPase subunit I</fullName>
    </alternativeName>
    <alternativeName>
        <fullName evidence="1">F-type ATPase subunit b</fullName>
        <shortName evidence="1">F-ATPase subunit b</shortName>
    </alternativeName>
</protein>
<keyword id="KW-0066">ATP synthesis</keyword>
<keyword id="KW-0997">Cell inner membrane</keyword>
<keyword id="KW-1003">Cell membrane</keyword>
<keyword id="KW-0138">CF(0)</keyword>
<keyword id="KW-0375">Hydrogen ion transport</keyword>
<keyword id="KW-0406">Ion transport</keyword>
<keyword id="KW-0472">Membrane</keyword>
<keyword id="KW-1185">Reference proteome</keyword>
<keyword id="KW-0812">Transmembrane</keyword>
<keyword id="KW-1133">Transmembrane helix</keyword>
<keyword id="KW-0813">Transport</keyword>
<comment type="function">
    <text evidence="1">F(1)F(0) ATP synthase produces ATP from ADP in the presence of a proton or sodium gradient. F-type ATPases consist of two structural domains, F(1) containing the extramembraneous catalytic core and F(0) containing the membrane proton channel, linked together by a central stalk and a peripheral stalk. During catalysis, ATP synthesis in the catalytic domain of F(1) is coupled via a rotary mechanism of the central stalk subunits to proton translocation.</text>
</comment>
<comment type="function">
    <text evidence="1">Component of the F(0) channel, it forms part of the peripheral stalk, linking F(1) to F(0).</text>
</comment>
<comment type="subunit">
    <text evidence="1">F-type ATPases have 2 components, F(1) - the catalytic core - and F(0) - the membrane proton channel. F(1) has five subunits: alpha(3), beta(3), gamma(1), delta(1), epsilon(1). F(0) has three main subunits: a(1), b(2) and c(10-14). The alpha and beta chains form an alternating ring which encloses part of the gamma chain. F(1) is attached to F(0) by a central stalk formed by the gamma and epsilon chains, while a peripheral stalk is formed by the delta and b chains.</text>
</comment>
<comment type="subcellular location">
    <subcellularLocation>
        <location evidence="1">Cell inner membrane</location>
        <topology evidence="1">Single-pass membrane protein</topology>
    </subcellularLocation>
</comment>
<comment type="similarity">
    <text evidence="1">Belongs to the ATPase B chain family.</text>
</comment>
<gene>
    <name evidence="1" type="primary">atpF</name>
    <name type="ordered locus">LA_2781</name>
</gene>
<name>ATPF_LEPIN</name>
<proteinExistence type="inferred from homology"/>
<organism>
    <name type="scientific">Leptospira interrogans serogroup Icterohaemorrhagiae serovar Lai (strain 56601)</name>
    <dbReference type="NCBI Taxonomy" id="189518"/>
    <lineage>
        <taxon>Bacteria</taxon>
        <taxon>Pseudomonadati</taxon>
        <taxon>Spirochaetota</taxon>
        <taxon>Spirochaetia</taxon>
        <taxon>Leptospirales</taxon>
        <taxon>Leptospiraceae</taxon>
        <taxon>Leptospira</taxon>
    </lineage>
</organism>
<accession>Q8F2J0</accession>